<keyword id="KW-0963">Cytoplasm</keyword>
<keyword id="KW-0472">Membrane</keyword>
<keyword id="KW-0479">Metal-binding</keyword>
<keyword id="KW-1185">Reference proteome</keyword>
<keyword id="KW-0808">Transferase</keyword>
<keyword id="KW-0812">Transmembrane</keyword>
<keyword id="KW-1133">Transmembrane helix</keyword>
<keyword id="KW-0833">Ubl conjugation pathway</keyword>
<keyword id="KW-0862">Zinc</keyword>
<keyword id="KW-0863">Zinc-finger</keyword>
<reference key="1">
    <citation type="submission" date="2004-06" db="EMBL/GenBank/DDBJ databases">
        <authorList>
            <consortium name="NIH - Xenopus Gene Collection (XGC) project"/>
        </authorList>
    </citation>
    <scope>NUCLEOTIDE SEQUENCE [LARGE SCALE MRNA]</scope>
    <source>
        <tissue>Eye</tissue>
    </source>
</reference>
<name>RN182_XENLA</name>
<accession>Q6INB3</accession>
<comment type="function">
    <text evidence="2">E3 ubiquitin-protein ligase that mediates the ubiquitination of atp6v0c and targets it to degradation via the ubiquitin-proteasome pathway.</text>
</comment>
<comment type="catalytic activity">
    <reaction>
        <text>S-ubiquitinyl-[E2 ubiquitin-conjugating enzyme]-L-cysteine + [acceptor protein]-L-lysine = [E2 ubiquitin-conjugating enzyme]-L-cysteine + N(6)-ubiquitinyl-[acceptor protein]-L-lysine.</text>
        <dbReference type="EC" id="2.3.2.27"/>
    </reaction>
</comment>
<comment type="pathway">
    <text>Protein modification; protein ubiquitination.</text>
</comment>
<comment type="subunit">
    <text evidence="2">Interacts with ATP6V0C.</text>
</comment>
<comment type="subcellular location">
    <subcellularLocation>
        <location evidence="5">Membrane</location>
        <topology evidence="5">Multi-pass membrane protein</topology>
    </subcellularLocation>
    <subcellularLocation>
        <location evidence="2">Cytoplasm</location>
    </subcellularLocation>
</comment>
<comment type="domain">
    <text evidence="1">The RING-type zinc finger domain is required for E3 ligase activity.</text>
</comment>
<feature type="chain" id="PRO_0000261622" description="E3 ubiquitin-protein ligase RNF182">
    <location>
        <begin position="1"/>
        <end position="246"/>
    </location>
</feature>
<feature type="transmembrane region" description="Helical" evidence="3">
    <location>
        <begin position="184"/>
        <end position="204"/>
    </location>
</feature>
<feature type="transmembrane region" description="Helical" evidence="3">
    <location>
        <begin position="211"/>
        <end position="231"/>
    </location>
</feature>
<feature type="zinc finger region" description="RING-type" evidence="4">
    <location>
        <begin position="22"/>
        <end position="70"/>
    </location>
</feature>
<sequence>MTSQLSEDNSESPNLNSDELECKICYNRYNLRQRKPKVLGCCHRVCAKCLYKLVDCGESPQCVIVCPFCRFETRMPEDEVSSLPDDNNILLNLACGGRGKCVGDNPTELLLTPKRLSTIVTPSHTSTNCLVITIMEVQRESSPALNTTPMVEFYRPSNYDPVSIPQNWTVWNCTSLICKTSVRVFVWLLGLLYFSSLPLGIYLLVSKKVTLGVVFVSLVPSSLVILMIYGFCQCMCHEFLDCMSTP</sequence>
<gene>
    <name type="primary">rnf182</name>
</gene>
<proteinExistence type="evidence at transcript level"/>
<protein>
    <recommendedName>
        <fullName>E3 ubiquitin-protein ligase RNF182</fullName>
        <ecNumber>2.3.2.27</ecNumber>
    </recommendedName>
    <alternativeName>
        <fullName>RING finger protein 182</fullName>
    </alternativeName>
    <alternativeName>
        <fullName evidence="5">RING-type E3 ubiquitin transferase RNF182</fullName>
    </alternativeName>
</protein>
<dbReference type="EC" id="2.3.2.27"/>
<dbReference type="EMBL" id="BC072370">
    <property type="protein sequence ID" value="AAH72370.1"/>
    <property type="molecule type" value="mRNA"/>
</dbReference>
<dbReference type="RefSeq" id="NP_001085077.1">
    <property type="nucleotide sequence ID" value="NM_001091608.1"/>
</dbReference>
<dbReference type="SMR" id="Q6INB3"/>
<dbReference type="DNASU" id="432148"/>
<dbReference type="GeneID" id="432148"/>
<dbReference type="KEGG" id="xla:432148"/>
<dbReference type="AGR" id="Xenbase:XB-GENE-17336205"/>
<dbReference type="CTD" id="432148"/>
<dbReference type="Xenbase" id="XB-GENE-17336205">
    <property type="gene designation" value="rnf182.S"/>
</dbReference>
<dbReference type="OrthoDB" id="8936585at2759"/>
<dbReference type="UniPathway" id="UPA00143"/>
<dbReference type="Proteomes" id="UP000186698">
    <property type="component" value="Chromosome 6S"/>
</dbReference>
<dbReference type="Bgee" id="432148">
    <property type="expression patterns" value="Expressed in camera-type eye and 1 other cell type or tissue"/>
</dbReference>
<dbReference type="GO" id="GO:0005737">
    <property type="term" value="C:cytoplasm"/>
    <property type="evidence" value="ECO:0000318"/>
    <property type="project" value="GO_Central"/>
</dbReference>
<dbReference type="GO" id="GO:0016020">
    <property type="term" value="C:membrane"/>
    <property type="evidence" value="ECO:0007669"/>
    <property type="project" value="UniProtKB-SubCell"/>
</dbReference>
<dbReference type="GO" id="GO:0004842">
    <property type="term" value="F:ubiquitin-protein transferase activity"/>
    <property type="evidence" value="ECO:0000250"/>
    <property type="project" value="UniProtKB"/>
</dbReference>
<dbReference type="GO" id="GO:0008270">
    <property type="term" value="F:zinc ion binding"/>
    <property type="evidence" value="ECO:0007669"/>
    <property type="project" value="UniProtKB-KW"/>
</dbReference>
<dbReference type="GO" id="GO:0016567">
    <property type="term" value="P:protein ubiquitination"/>
    <property type="evidence" value="ECO:0000250"/>
    <property type="project" value="UniProtKB"/>
</dbReference>
<dbReference type="CDD" id="cd16555">
    <property type="entry name" value="RING-HC_RNF182"/>
    <property type="match status" value="1"/>
</dbReference>
<dbReference type="FunFam" id="3.30.40.10:FF:000319">
    <property type="entry name" value="E3 ubiquitin-protein ligase RNF182"/>
    <property type="match status" value="1"/>
</dbReference>
<dbReference type="Gene3D" id="3.30.40.10">
    <property type="entry name" value="Zinc/RING finger domain, C3HC4 (zinc finger)"/>
    <property type="match status" value="1"/>
</dbReference>
<dbReference type="InterPro" id="IPR042285">
    <property type="entry name" value="RNF182"/>
</dbReference>
<dbReference type="InterPro" id="IPR047986">
    <property type="entry name" value="RNF182_RING-HC"/>
</dbReference>
<dbReference type="InterPro" id="IPR001841">
    <property type="entry name" value="Znf_RING"/>
</dbReference>
<dbReference type="InterPro" id="IPR013083">
    <property type="entry name" value="Znf_RING/FYVE/PHD"/>
</dbReference>
<dbReference type="InterPro" id="IPR017907">
    <property type="entry name" value="Znf_RING_CS"/>
</dbReference>
<dbReference type="PANTHER" id="PTHR46675">
    <property type="entry name" value="E3 UBIQUITIN-PROTEIN LIGASE RNF182"/>
    <property type="match status" value="1"/>
</dbReference>
<dbReference type="PANTHER" id="PTHR46675:SF2">
    <property type="entry name" value="E3 UBIQUITIN-PROTEIN LIGASE RNF182"/>
    <property type="match status" value="1"/>
</dbReference>
<dbReference type="SMART" id="SM00184">
    <property type="entry name" value="RING"/>
    <property type="match status" value="1"/>
</dbReference>
<dbReference type="SUPFAM" id="SSF57850">
    <property type="entry name" value="RING/U-box"/>
    <property type="match status" value="1"/>
</dbReference>
<dbReference type="PROSITE" id="PS00518">
    <property type="entry name" value="ZF_RING_1"/>
    <property type="match status" value="1"/>
</dbReference>
<dbReference type="PROSITE" id="PS50089">
    <property type="entry name" value="ZF_RING_2"/>
    <property type="match status" value="1"/>
</dbReference>
<organism>
    <name type="scientific">Xenopus laevis</name>
    <name type="common">African clawed frog</name>
    <dbReference type="NCBI Taxonomy" id="8355"/>
    <lineage>
        <taxon>Eukaryota</taxon>
        <taxon>Metazoa</taxon>
        <taxon>Chordata</taxon>
        <taxon>Craniata</taxon>
        <taxon>Vertebrata</taxon>
        <taxon>Euteleostomi</taxon>
        <taxon>Amphibia</taxon>
        <taxon>Batrachia</taxon>
        <taxon>Anura</taxon>
        <taxon>Pipoidea</taxon>
        <taxon>Pipidae</taxon>
        <taxon>Xenopodinae</taxon>
        <taxon>Xenopus</taxon>
        <taxon>Xenopus</taxon>
    </lineage>
</organism>
<evidence type="ECO:0000250" key="1"/>
<evidence type="ECO:0000250" key="2">
    <source>
        <dbReference type="UniProtKB" id="Q8N6D2"/>
    </source>
</evidence>
<evidence type="ECO:0000255" key="3"/>
<evidence type="ECO:0000255" key="4">
    <source>
        <dbReference type="PROSITE-ProRule" id="PRU00175"/>
    </source>
</evidence>
<evidence type="ECO:0000305" key="5"/>